<accession>P19887</accession>
<keyword id="KW-0903">Direct protein sequencing</keyword>
<keyword id="KW-0255">Endonuclease</keyword>
<keyword id="KW-0378">Hydrolase</keyword>
<keyword id="KW-0540">Nuclease</keyword>
<keyword id="KW-0680">Restriction system</keyword>
<dbReference type="EC" id="3.1.21.4"/>
<dbReference type="EMBL" id="D00704">
    <property type="protein sequence ID" value="BAA00612.1"/>
    <property type="molecule type" value="Genomic_DNA"/>
</dbReference>
<dbReference type="PIR" id="JX0116">
    <property type="entry name" value="JX0116"/>
</dbReference>
<dbReference type="PRO" id="PR:P19887"/>
<dbReference type="GO" id="GO:0009036">
    <property type="term" value="F:type II site-specific deoxyribonuclease activity"/>
    <property type="evidence" value="ECO:0007669"/>
    <property type="project" value="UniProtKB-EC"/>
</dbReference>
<dbReference type="GO" id="GO:0009307">
    <property type="term" value="P:DNA restriction-modification system"/>
    <property type="evidence" value="ECO:0007669"/>
    <property type="project" value="UniProtKB-KW"/>
</dbReference>
<dbReference type="Pfam" id="PF24447">
    <property type="entry name" value="RE_BanI"/>
    <property type="match status" value="1"/>
</dbReference>
<comment type="function">
    <text evidence="2 3">A P subtype restriction enzyme that recognizes the double-stranded sequence 5'-GGYRCC-3' and cleaves after G-1.</text>
</comment>
<comment type="catalytic activity">
    <reaction>
        <text>Endonucleolytic cleavage of DNA to give specific double-stranded fragments with terminal 5'-phosphates.</text>
        <dbReference type="EC" id="3.1.21.4"/>
    </reaction>
</comment>
<comment type="subunit">
    <text evidence="1">Homodimer.</text>
</comment>
<feature type="initiator methionine" description="Removed" evidence="1">
    <location>
        <position position="1"/>
    </location>
</feature>
<feature type="chain" id="PRO_0000077282" description="Type II restriction enzyme BanI">
    <location>
        <begin position="2"/>
        <end position="354"/>
    </location>
</feature>
<reference key="1">
    <citation type="journal article" date="1990" name="J. Biochem.">
        <title>Cloning and nucleotide sequences of the BanI restriction-modification genes in Bacillus aneurinolyticus.</title>
        <authorList>
            <person name="Maekawa Y."/>
            <person name="Yasukawa H."/>
            <person name="Kawakami B."/>
        </authorList>
    </citation>
    <scope>NUCLEOTIDE SEQUENCE [GENOMIC DNA]</scope>
    <scope>PROTEIN SEQUENCE OF 2-16</scope>
    <scope>FUNCTION</scope>
    <scope>SUBUNIT</scope>
    <source>
        <strain>ATCC 12856 / DSM 5562 / JCM 9024 / NBRC 15521 / IAM 1077 / NRS 1589</strain>
    </source>
</reference>
<reference key="2">
    <citation type="journal article" date="2003" name="Nucleic Acids Res.">
        <title>A nomenclature for restriction enzymes, DNA methyltransferases, homing endonucleases and their genes.</title>
        <authorList>
            <person name="Roberts R.J."/>
            <person name="Belfort M."/>
            <person name="Bestor T."/>
            <person name="Bhagwat A.S."/>
            <person name="Bickle T.A."/>
            <person name="Bitinaite J."/>
            <person name="Blumenthal R.M."/>
            <person name="Degtyarev S.K."/>
            <person name="Dryden D.T."/>
            <person name="Dybvig K."/>
            <person name="Firman K."/>
            <person name="Gromova E.S."/>
            <person name="Gumport R.I."/>
            <person name="Halford S.E."/>
            <person name="Hattman S."/>
            <person name="Heitman J."/>
            <person name="Hornby D.P."/>
            <person name="Janulaitis A."/>
            <person name="Jeltsch A."/>
            <person name="Josephsen J."/>
            <person name="Kiss A."/>
            <person name="Klaenhammer T.R."/>
            <person name="Kobayashi I."/>
            <person name="Kong H."/>
            <person name="Krueger D.H."/>
            <person name="Lacks S."/>
            <person name="Marinus M.G."/>
            <person name="Miyahara M."/>
            <person name="Morgan R.D."/>
            <person name="Murray N.E."/>
            <person name="Nagaraja V."/>
            <person name="Piekarowicz A."/>
            <person name="Pingoud A."/>
            <person name="Raleigh E."/>
            <person name="Rao D.N."/>
            <person name="Reich N."/>
            <person name="Repin V.E."/>
            <person name="Selker E.U."/>
            <person name="Shaw P.C."/>
            <person name="Stein D.C."/>
            <person name="Stoddard B.L."/>
            <person name="Szybalski W."/>
            <person name="Trautner T.A."/>
            <person name="Van Etten J.L."/>
            <person name="Vitor J.M."/>
            <person name="Wilson G.G."/>
            <person name="Xu S.Y."/>
        </authorList>
    </citation>
    <scope>NOMENCLATURE</scope>
    <scope>SUBTYPE</scope>
</reference>
<proteinExistence type="evidence at protein level"/>
<protein>
    <recommendedName>
        <fullName evidence="2">Type II restriction enzyme BanI</fullName>
        <shortName>R.BanI</shortName>
        <ecNumber>3.1.21.4</ecNumber>
    </recommendedName>
    <alternativeName>
        <fullName>Endonuclease BanI</fullName>
    </alternativeName>
    <alternativeName>
        <fullName>Type-2 restriction enzyme BanI</fullName>
    </alternativeName>
</protein>
<gene>
    <name type="primary">banIR</name>
</gene>
<organism>
    <name type="scientific">Aneurinibacillus aneurinilyticus</name>
    <name type="common">Bacillus aneurinolyticus</name>
    <dbReference type="NCBI Taxonomy" id="1391"/>
    <lineage>
        <taxon>Bacteria</taxon>
        <taxon>Bacillati</taxon>
        <taxon>Bacillota</taxon>
        <taxon>Bacilli</taxon>
        <taxon>Bacillales</taxon>
        <taxon>Paenibacillaceae</taxon>
        <taxon>Aneurinibacillus group</taxon>
        <taxon>Aneurinibacillus</taxon>
    </lineage>
</organism>
<evidence type="ECO:0000269" key="1">
    <source>
    </source>
</evidence>
<evidence type="ECO:0000303" key="2">
    <source>
    </source>
</evidence>
<evidence type="ECO:0000305" key="3">
    <source>
    </source>
</evidence>
<sequence length="354" mass="39861">MAQLKYNKDIDELERNAAKWWPDFLAKKESSTSIIPKLVESQDAFISLLNLSKNNPFDIFQLIDASKFPPNLFLKHLVVLTDFGGEPLNRLNQNFDSLFPMIPYGIHYITKVLGKFEFFWNEKKYEYVFQELPVTSLTNSKLKIDGASISKTVPLSDLYKDVIVLLMFGANAVNSEVSEVLMKCEVGNLIGKTDELKKFIKERYIFVSRITGGAEANTLGQVAQTHVIDFLRTRFGSKGHDIKSNGHIEGVTHNDGQTLTTFDVVIKKGSKSVAIEISFQVTTNSTIERKAGQAKARYDMVSDTGNYIAYIIDGAGNFQRKNAITTICNNSHCTVAYTEEELNVLLKFILEKLE</sequence>
<name>T2BA_ANEAE</name>